<sequence>MQDKRTVKVGTVADTAVGGRTKSLGVEVTDSVNSFGARNRVKVGDKSYQIYRLDAVPNTEKLPYSLKVLAENLLRNEDGSNITKDHIEAIANWDPKAGASIEIQYTPARVVMQDFTGVPCIVDLATMREAIADLGGNPEKVNPLAPADLVIDHSVIADLFGTADAFERNVEIEYQRNGERYQFLRWLQGAFSDFKVVPPRRIVHQVNIEYLARVVMERVGVAYPDTCVGTDSHTTMVNGLGVLGWGVGGIEAEAAMLGQPVSMLIPRVVGFKLTGEDPAPGAATDVVLTVTEICAKHGVVGKFVEFYGEGVAEVPLANRATLGNMSPEFGSTAAIFPIDQETIDYLKFTGRNAEQVALVETYAKEQGLWHDPAHEPAFSEYLELDLSQVVPSIAGPKRPQDRIALSQAKSVFREQIPSYVGDGDGQQGYSKLDEVVDETFPASDPGAPSNGHADDLPAVQSAAAHANGRPSNPVTVRSDELGEFVLDHGAVVIAAVTSCTNTSNPEVMLGAALLARQRVEKGLASKPWVKTTMAPGSQVVHDYYDKAGLWPYLEKLGFYLVGYGCTTCIGNSGPLPEEISKAINDNDLSVTAVLSGNRNFEGRINPDVKMNYPASPPLVVAYALAGTMTRLEKQPLGKDKDGNDVYLKDICRSQKTLGHHPIGDNSEWFTKNYADVFKGEQAWRNLPTPTRNTFEWSPDSTYVRKPPYFEGMPAEPEPVADISSARVVALLGDSVTTDHISPAGSIKPGTPAAQYLDDARRGPQGLQLFGCRRGNHEVMIRGTFANIRLRNLLHDDVAGGYTRDFTQDGGPQAFIYDAAQNYAAQNIPLVVLGGKEYGSGSSRDWAAKGTRLLGVRAVIAESFERIHRSNLIGMGVIPLQFPDGKSAKDLGLDGTEVFDITGIEELNKGKTPKTVHVKASKNGSDAAEFDAVVRIDTPGEADYYRNGGILQYVLRNMLKSG</sequence>
<organism>
    <name type="scientific">Mycobacterium avium</name>
    <dbReference type="NCBI Taxonomy" id="1764"/>
    <lineage>
        <taxon>Bacteria</taxon>
        <taxon>Bacillati</taxon>
        <taxon>Actinomycetota</taxon>
        <taxon>Actinomycetes</taxon>
        <taxon>Mycobacteriales</taxon>
        <taxon>Mycobacteriaceae</taxon>
        <taxon>Mycobacterium</taxon>
        <taxon>Mycobacterium avium complex (MAC)</taxon>
    </lineage>
</organism>
<proteinExistence type="inferred from homology"/>
<protein>
    <recommendedName>
        <fullName evidence="1">Aconitate hydratase A</fullName>
        <shortName evidence="1">ACN</shortName>
        <shortName evidence="1">Aconitase</shortName>
        <ecNumber evidence="1">4.2.1.3</ecNumber>
    </recommendedName>
    <alternativeName>
        <fullName evidence="4">(2R,3S)-2-methylisocitrate dehydratase</fullName>
    </alternativeName>
    <alternativeName>
        <fullName evidence="4">(2S,3R)-3-hydroxybutane-1,2,3-tricarboxylate dehydratase</fullName>
    </alternativeName>
    <alternativeName>
        <fullName evidence="1">Iron-responsive protein-like</fullName>
        <shortName evidence="1">IRP-like</shortName>
    </alternativeName>
    <alternativeName>
        <fullName evidence="4">Probable 2-methyl-cis-aconitate hydratase</fullName>
        <ecNumber evidence="4">4.2.1.99</ecNumber>
    </alternativeName>
    <alternativeName>
        <fullName evidence="1">RNA-binding protein</fullName>
    </alternativeName>
</protein>
<keyword id="KW-0004">4Fe-4S</keyword>
<keyword id="KW-0408">Iron</keyword>
<keyword id="KW-0411">Iron-sulfur</keyword>
<keyword id="KW-0456">Lyase</keyword>
<keyword id="KW-0479">Metal-binding</keyword>
<keyword id="KW-0694">RNA-binding</keyword>
<keyword id="KW-0816">Tricarboxylic acid cycle</keyword>
<gene>
    <name type="primary">acn</name>
</gene>
<reference key="1">
    <citation type="journal article" date="1998" name="Microbiology">
        <title>Determination of a 15437 bp nucleotide sequence around the inhA gene of Mycobacterium avium and similarity analysis of the products of putative ORFs.</title>
        <authorList>
            <person name="Labo M."/>
            <person name="Gusberti L."/>
            <person name="de Rossi E."/>
            <person name="Speziale P."/>
            <person name="Riccardi G."/>
        </authorList>
    </citation>
    <scope>NUCLEOTIDE SEQUENCE [GENOMIC DNA]</scope>
    <source>
        <strain>GIR10</strain>
    </source>
</reference>
<comment type="function">
    <text evidence="1 4">Involved in the catabolism of short chain fatty acids (SCFA) via the tricarboxylic acid (TCA)(acetyl degradation route) and probably via the 2-methylcitrate cycle I (propionate degradation route). Catalyzes the reversible isomerization of citrate to isocitrate via cis-aconitate. The apo form of AcnA functions as a RNA-binding regulatory protein. Could catalyze the hydration of 2-methyl-cis-aconitate to yield (2R,3S)-2-methylisocitrate.</text>
</comment>
<comment type="catalytic activity">
    <reaction evidence="1">
        <text>citrate = D-threo-isocitrate</text>
        <dbReference type="Rhea" id="RHEA:10336"/>
        <dbReference type="ChEBI" id="CHEBI:15562"/>
        <dbReference type="ChEBI" id="CHEBI:16947"/>
        <dbReference type="EC" id="4.2.1.3"/>
    </reaction>
</comment>
<comment type="catalytic activity">
    <reaction evidence="4">
        <text>(2S,3R)-3-hydroxybutane-1,2,3-tricarboxylate = 2-methyl-cis-aconitate + H2O</text>
        <dbReference type="Rhea" id="RHEA:17941"/>
        <dbReference type="ChEBI" id="CHEBI:15377"/>
        <dbReference type="ChEBI" id="CHEBI:57429"/>
        <dbReference type="ChEBI" id="CHEBI:57872"/>
        <dbReference type="EC" id="4.2.1.99"/>
    </reaction>
</comment>
<comment type="cofactor">
    <cofactor evidence="2">
        <name>[4Fe-4S] cluster</name>
        <dbReference type="ChEBI" id="CHEBI:49883"/>
    </cofactor>
    <text evidence="2">Binds 1 [4Fe-4S] cluster per subunit.</text>
</comment>
<comment type="pathway">
    <text evidence="1">Carbohydrate metabolism; tricarboxylic acid cycle; isocitrate from oxaloacetate: step 2/2.</text>
</comment>
<comment type="pathway">
    <text evidence="1">Organic acid metabolism; propanoate degradation.</text>
</comment>
<comment type="subunit">
    <text evidence="1">Monomer.</text>
</comment>
<comment type="similarity">
    <text evidence="5">Belongs to the aconitase/IPM isomerase family.</text>
</comment>
<dbReference type="EC" id="4.2.1.3" evidence="1"/>
<dbReference type="EC" id="4.2.1.99" evidence="4"/>
<dbReference type="EMBL" id="AF002133">
    <property type="protein sequence ID" value="AAC46192.1"/>
    <property type="molecule type" value="Genomic_DNA"/>
</dbReference>
<dbReference type="SMR" id="O08451"/>
<dbReference type="UniPathway" id="UPA00223">
    <property type="reaction ID" value="UER00718"/>
</dbReference>
<dbReference type="UniPathway" id="UPA00946"/>
<dbReference type="GO" id="GO:0047456">
    <property type="term" value="F:2-methylisocitrate dehydratase activity"/>
    <property type="evidence" value="ECO:0000250"/>
    <property type="project" value="UniProtKB"/>
</dbReference>
<dbReference type="GO" id="GO:0051539">
    <property type="term" value="F:4 iron, 4 sulfur cluster binding"/>
    <property type="evidence" value="ECO:0000250"/>
    <property type="project" value="UniProtKB"/>
</dbReference>
<dbReference type="GO" id="GO:0003994">
    <property type="term" value="F:aconitate hydratase activity"/>
    <property type="evidence" value="ECO:0000250"/>
    <property type="project" value="UniProtKB"/>
</dbReference>
<dbReference type="GO" id="GO:0046872">
    <property type="term" value="F:metal ion binding"/>
    <property type="evidence" value="ECO:0007669"/>
    <property type="project" value="UniProtKB-KW"/>
</dbReference>
<dbReference type="GO" id="GO:0003730">
    <property type="term" value="F:mRNA 3'-UTR binding"/>
    <property type="evidence" value="ECO:0000250"/>
    <property type="project" value="UniProtKB"/>
</dbReference>
<dbReference type="GO" id="GO:0003729">
    <property type="term" value="F:mRNA binding"/>
    <property type="evidence" value="ECO:0000250"/>
    <property type="project" value="UniProtKB"/>
</dbReference>
<dbReference type="GO" id="GO:0006099">
    <property type="term" value="P:tricarboxylic acid cycle"/>
    <property type="evidence" value="ECO:0007669"/>
    <property type="project" value="UniProtKB-UniPathway"/>
</dbReference>
<dbReference type="CDD" id="cd01580">
    <property type="entry name" value="AcnA_IRP_Swivel"/>
    <property type="match status" value="1"/>
</dbReference>
<dbReference type="FunFam" id="3.20.19.10:FF:000001">
    <property type="entry name" value="Aconitate hydratase"/>
    <property type="match status" value="1"/>
</dbReference>
<dbReference type="FunFam" id="3.30.499.10:FF:000002">
    <property type="entry name" value="Aconitate hydratase"/>
    <property type="match status" value="1"/>
</dbReference>
<dbReference type="FunFam" id="3.30.499.10:FF:000009">
    <property type="entry name" value="Aconitate hydratase"/>
    <property type="match status" value="1"/>
</dbReference>
<dbReference type="Gene3D" id="6.10.190.10">
    <property type="match status" value="1"/>
</dbReference>
<dbReference type="Gene3D" id="3.30.499.10">
    <property type="entry name" value="Aconitase, domain 3"/>
    <property type="match status" value="2"/>
</dbReference>
<dbReference type="Gene3D" id="3.20.19.10">
    <property type="entry name" value="Aconitase, domain 4"/>
    <property type="match status" value="1"/>
</dbReference>
<dbReference type="InterPro" id="IPR044137">
    <property type="entry name" value="AcnA_IRP_Swivel"/>
</dbReference>
<dbReference type="InterPro" id="IPR015931">
    <property type="entry name" value="Acnase/IPM_dHydase_lsu_aba_1/3"/>
</dbReference>
<dbReference type="InterPro" id="IPR001030">
    <property type="entry name" value="Acoase/IPM_deHydtase_lsu_aba"/>
</dbReference>
<dbReference type="InterPro" id="IPR015928">
    <property type="entry name" value="Aconitase/3IPM_dehydase_swvl"/>
</dbReference>
<dbReference type="InterPro" id="IPR006249">
    <property type="entry name" value="Aconitase/IRP2"/>
</dbReference>
<dbReference type="InterPro" id="IPR018136">
    <property type="entry name" value="Aconitase_4Fe-4S_BS"/>
</dbReference>
<dbReference type="InterPro" id="IPR036008">
    <property type="entry name" value="Aconitase_4Fe-4S_dom"/>
</dbReference>
<dbReference type="InterPro" id="IPR000573">
    <property type="entry name" value="AconitaseA/IPMdHydase_ssu_swvl"/>
</dbReference>
<dbReference type="NCBIfam" id="NF006757">
    <property type="entry name" value="PRK09277.1"/>
    <property type="match status" value="1"/>
</dbReference>
<dbReference type="NCBIfam" id="NF009520">
    <property type="entry name" value="PRK12881.1"/>
    <property type="match status" value="1"/>
</dbReference>
<dbReference type="PANTHER" id="PTHR11670">
    <property type="entry name" value="ACONITASE/IRON-RESPONSIVE ELEMENT FAMILY MEMBER"/>
    <property type="match status" value="1"/>
</dbReference>
<dbReference type="Pfam" id="PF00330">
    <property type="entry name" value="Aconitase"/>
    <property type="match status" value="1"/>
</dbReference>
<dbReference type="Pfam" id="PF00694">
    <property type="entry name" value="Aconitase_C"/>
    <property type="match status" value="1"/>
</dbReference>
<dbReference type="PRINTS" id="PR00415">
    <property type="entry name" value="ACONITASE"/>
</dbReference>
<dbReference type="SUPFAM" id="SSF53732">
    <property type="entry name" value="Aconitase iron-sulfur domain"/>
    <property type="match status" value="1"/>
</dbReference>
<dbReference type="SUPFAM" id="SSF52016">
    <property type="entry name" value="LeuD/IlvD-like"/>
    <property type="match status" value="1"/>
</dbReference>
<dbReference type="PROSITE" id="PS00450">
    <property type="entry name" value="ACONITASE_1"/>
    <property type="match status" value="1"/>
</dbReference>
<dbReference type="PROSITE" id="PS01244">
    <property type="entry name" value="ACONITASE_2"/>
    <property type="match status" value="1"/>
</dbReference>
<evidence type="ECO:0000250" key="1">
    <source>
        <dbReference type="UniProtKB" id="O53166"/>
    </source>
</evidence>
<evidence type="ECO:0000250" key="2">
    <source>
        <dbReference type="UniProtKB" id="P09339"/>
    </source>
</evidence>
<evidence type="ECO:0000250" key="3">
    <source>
        <dbReference type="UniProtKB" id="P36683"/>
    </source>
</evidence>
<evidence type="ECO:0000250" key="4">
    <source>
        <dbReference type="UniProtKB" id="Q8ZP52"/>
    </source>
</evidence>
<evidence type="ECO:0000305" key="5"/>
<name>ACNA_MYCAV</name>
<accession>O08451</accession>
<feature type="chain" id="PRO_0000076663" description="Aconitate hydratase A">
    <location>
        <begin position="1"/>
        <end position="961"/>
    </location>
</feature>
<feature type="binding site" evidence="3">
    <location>
        <position position="499"/>
    </location>
    <ligand>
        <name>[4Fe-4S] cluster</name>
        <dbReference type="ChEBI" id="CHEBI:49883"/>
    </ligand>
</feature>
<feature type="binding site" evidence="3">
    <location>
        <position position="565"/>
    </location>
    <ligand>
        <name>[4Fe-4S] cluster</name>
        <dbReference type="ChEBI" id="CHEBI:49883"/>
    </ligand>
</feature>
<feature type="binding site" evidence="3">
    <location>
        <position position="568"/>
    </location>
    <ligand>
        <name>[4Fe-4S] cluster</name>
        <dbReference type="ChEBI" id="CHEBI:49883"/>
    </ligand>
</feature>